<gene>
    <name evidence="1" type="primary">yhaM</name>
    <name type="ordered locus">lin2323</name>
</gene>
<evidence type="ECO:0000255" key="1">
    <source>
        <dbReference type="HAMAP-Rule" id="MF_01427"/>
    </source>
</evidence>
<evidence type="ECO:0000255" key="2">
    <source>
        <dbReference type="PROSITE-ProRule" id="PRU01175"/>
    </source>
</evidence>
<name>YHAM_LISIN</name>
<comment type="function">
    <text evidence="1">Shows a 3'-5' exoribonuclease activity.</text>
</comment>
<comment type="similarity">
    <text evidence="1">Belongs to the YhaM family.</text>
</comment>
<organism>
    <name type="scientific">Listeria innocua serovar 6a (strain ATCC BAA-680 / CLIP 11262)</name>
    <dbReference type="NCBI Taxonomy" id="272626"/>
    <lineage>
        <taxon>Bacteria</taxon>
        <taxon>Bacillati</taxon>
        <taxon>Bacillota</taxon>
        <taxon>Bacilli</taxon>
        <taxon>Bacillales</taxon>
        <taxon>Listeriaceae</taxon>
        <taxon>Listeria</taxon>
    </lineage>
</organism>
<protein>
    <recommendedName>
        <fullName evidence="1">3'-5' exoribonuclease YhaM</fullName>
        <ecNumber evidence="1">3.1.-.-</ecNumber>
    </recommendedName>
</protein>
<feature type="chain" id="PRO_0000109863" description="3'-5' exoribonuclease YhaM">
    <location>
        <begin position="1"/>
        <end position="313"/>
    </location>
</feature>
<feature type="domain" description="HD" evidence="2">
    <location>
        <begin position="163"/>
        <end position="279"/>
    </location>
</feature>
<feature type="DNA-binding region" description="OB">
    <location>
        <begin position="22"/>
        <end position="90"/>
    </location>
</feature>
<proteinExistence type="inferred from homology"/>
<keyword id="KW-0238">DNA-binding</keyword>
<keyword id="KW-0269">Exonuclease</keyword>
<keyword id="KW-0378">Hydrolase</keyword>
<keyword id="KW-0540">Nuclease</keyword>
<accession>Q929F3</accession>
<reference key="1">
    <citation type="journal article" date="2001" name="Science">
        <title>Comparative genomics of Listeria species.</title>
        <authorList>
            <person name="Glaser P."/>
            <person name="Frangeul L."/>
            <person name="Buchrieser C."/>
            <person name="Rusniok C."/>
            <person name="Amend A."/>
            <person name="Baquero F."/>
            <person name="Berche P."/>
            <person name="Bloecker H."/>
            <person name="Brandt P."/>
            <person name="Chakraborty T."/>
            <person name="Charbit A."/>
            <person name="Chetouani F."/>
            <person name="Couve E."/>
            <person name="de Daruvar A."/>
            <person name="Dehoux P."/>
            <person name="Domann E."/>
            <person name="Dominguez-Bernal G."/>
            <person name="Duchaud E."/>
            <person name="Durant L."/>
            <person name="Dussurget O."/>
            <person name="Entian K.-D."/>
            <person name="Fsihi H."/>
            <person name="Garcia-del Portillo F."/>
            <person name="Garrido P."/>
            <person name="Gautier L."/>
            <person name="Goebel W."/>
            <person name="Gomez-Lopez N."/>
            <person name="Hain T."/>
            <person name="Hauf J."/>
            <person name="Jackson D."/>
            <person name="Jones L.-M."/>
            <person name="Kaerst U."/>
            <person name="Kreft J."/>
            <person name="Kuhn M."/>
            <person name="Kunst F."/>
            <person name="Kurapkat G."/>
            <person name="Madueno E."/>
            <person name="Maitournam A."/>
            <person name="Mata Vicente J."/>
            <person name="Ng E."/>
            <person name="Nedjari H."/>
            <person name="Nordsiek G."/>
            <person name="Novella S."/>
            <person name="de Pablos B."/>
            <person name="Perez-Diaz J.-C."/>
            <person name="Purcell R."/>
            <person name="Remmel B."/>
            <person name="Rose M."/>
            <person name="Schlueter T."/>
            <person name="Simoes N."/>
            <person name="Tierrez A."/>
            <person name="Vazquez-Boland J.-A."/>
            <person name="Voss H."/>
            <person name="Wehland J."/>
            <person name="Cossart P."/>
        </authorList>
    </citation>
    <scope>NUCLEOTIDE SEQUENCE [LARGE SCALE GENOMIC DNA]</scope>
    <source>
        <strain>ATCC BAA-680 / CLIP 11262</strain>
    </source>
</reference>
<sequence length="313" mass="35455">MEKRLLDYEVGETVELFLLIKSSVKGTASNGKPFLSLVLQDKSGELEAKLWDVKESDEINYGVQQIVHLMGDIQNYRGRKQLKIRQIRQASPLDGVSASEFMETAPINKDEMADEITQYIFEMKNANLQRITRALLKKYQDDFYDYPAAMRHHHEFVSGLSFHVVSMLRLAKSVADLYPTVNRDLLYAGVILHDLGKVIELSGPVSTTYTLEGNLIGHISIVVEEVSKIAEELSIDGEEVVVLKHVLLSHHGKGEWGSPKPPLVREAEILHQIDLMDASLNMMDKVLKHTKPGEFSERVFGLDNRSFYNPTFE</sequence>
<dbReference type="EC" id="3.1.-.-" evidence="1"/>
<dbReference type="EMBL" id="AL596171">
    <property type="protein sequence ID" value="CAC97551.1"/>
    <property type="molecule type" value="Genomic_DNA"/>
</dbReference>
<dbReference type="PIR" id="AG1722">
    <property type="entry name" value="AG1722"/>
</dbReference>
<dbReference type="RefSeq" id="WP_010991127.1">
    <property type="nucleotide sequence ID" value="NC_003212.1"/>
</dbReference>
<dbReference type="SMR" id="Q929F3"/>
<dbReference type="STRING" id="272626.gene:17566685"/>
<dbReference type="KEGG" id="lin:lin2323"/>
<dbReference type="eggNOG" id="COG3481">
    <property type="taxonomic scope" value="Bacteria"/>
</dbReference>
<dbReference type="HOGENOM" id="CLU_056349_2_0_9"/>
<dbReference type="OrthoDB" id="9778453at2"/>
<dbReference type="Proteomes" id="UP000002513">
    <property type="component" value="Chromosome"/>
</dbReference>
<dbReference type="GO" id="GO:0000175">
    <property type="term" value="F:3'-5'-RNA exonuclease activity"/>
    <property type="evidence" value="ECO:0007669"/>
    <property type="project" value="UniProtKB-UniRule"/>
</dbReference>
<dbReference type="GO" id="GO:0003677">
    <property type="term" value="F:DNA binding"/>
    <property type="evidence" value="ECO:0007669"/>
    <property type="project" value="UniProtKB-KW"/>
</dbReference>
<dbReference type="GO" id="GO:0031125">
    <property type="term" value="P:rRNA 3'-end processing"/>
    <property type="evidence" value="ECO:0007669"/>
    <property type="project" value="TreeGrafter"/>
</dbReference>
<dbReference type="CDD" id="cd00077">
    <property type="entry name" value="HDc"/>
    <property type="match status" value="1"/>
</dbReference>
<dbReference type="CDD" id="cd04492">
    <property type="entry name" value="YhaM_OBF_like"/>
    <property type="match status" value="1"/>
</dbReference>
<dbReference type="FunFam" id="1.10.3210.10:FF:000008">
    <property type="entry name" value="3'-5' exoribonuclease YhaM"/>
    <property type="match status" value="1"/>
</dbReference>
<dbReference type="Gene3D" id="1.10.3210.10">
    <property type="entry name" value="Hypothetical protein af1432"/>
    <property type="match status" value="1"/>
</dbReference>
<dbReference type="Gene3D" id="2.40.50.140">
    <property type="entry name" value="Nucleic acid-binding proteins"/>
    <property type="match status" value="1"/>
</dbReference>
<dbReference type="HAMAP" id="MF_01427">
    <property type="entry name" value="3_5_Exoribonuc_YhaM"/>
    <property type="match status" value="1"/>
</dbReference>
<dbReference type="InterPro" id="IPR020873">
    <property type="entry name" value="3'-5'_exoribonuclease_YhaM"/>
</dbReference>
<dbReference type="InterPro" id="IPR003607">
    <property type="entry name" value="HD/PDEase_dom"/>
</dbReference>
<dbReference type="InterPro" id="IPR006674">
    <property type="entry name" value="HD_domain"/>
</dbReference>
<dbReference type="InterPro" id="IPR012340">
    <property type="entry name" value="NA-bd_OB-fold"/>
</dbReference>
<dbReference type="InterPro" id="IPR050798">
    <property type="entry name" value="YhaM_exoribonuc/phosphodiest"/>
</dbReference>
<dbReference type="NCBIfam" id="NF010007">
    <property type="entry name" value="PRK13480.1"/>
    <property type="match status" value="1"/>
</dbReference>
<dbReference type="PANTHER" id="PTHR37294">
    <property type="entry name" value="3'-5' EXORIBONUCLEASE YHAM"/>
    <property type="match status" value="1"/>
</dbReference>
<dbReference type="PANTHER" id="PTHR37294:SF1">
    <property type="entry name" value="3'-5' EXORIBONUCLEASE YHAM"/>
    <property type="match status" value="1"/>
</dbReference>
<dbReference type="Pfam" id="PF01966">
    <property type="entry name" value="HD"/>
    <property type="match status" value="1"/>
</dbReference>
<dbReference type="SUPFAM" id="SSF109604">
    <property type="entry name" value="HD-domain/PDEase-like"/>
    <property type="match status" value="1"/>
</dbReference>
<dbReference type="PROSITE" id="PS51831">
    <property type="entry name" value="HD"/>
    <property type="match status" value="1"/>
</dbReference>